<organism>
    <name type="scientific">Shewanella sp. (strain MR-4)</name>
    <dbReference type="NCBI Taxonomy" id="60480"/>
    <lineage>
        <taxon>Bacteria</taxon>
        <taxon>Pseudomonadati</taxon>
        <taxon>Pseudomonadota</taxon>
        <taxon>Gammaproteobacteria</taxon>
        <taxon>Alteromonadales</taxon>
        <taxon>Shewanellaceae</taxon>
        <taxon>Shewanella</taxon>
    </lineage>
</organism>
<proteinExistence type="inferred from homology"/>
<gene>
    <name evidence="1" type="primary">xni</name>
    <name evidence="1" type="synonym">ygdG</name>
    <name type="ordered locus">Shewmr4_2716</name>
</gene>
<reference key="1">
    <citation type="submission" date="2006-08" db="EMBL/GenBank/DDBJ databases">
        <title>Complete sequence of Shewanella sp. MR-4.</title>
        <authorList>
            <consortium name="US DOE Joint Genome Institute"/>
            <person name="Copeland A."/>
            <person name="Lucas S."/>
            <person name="Lapidus A."/>
            <person name="Barry K."/>
            <person name="Detter J.C."/>
            <person name="Glavina del Rio T."/>
            <person name="Hammon N."/>
            <person name="Israni S."/>
            <person name="Dalin E."/>
            <person name="Tice H."/>
            <person name="Pitluck S."/>
            <person name="Kiss H."/>
            <person name="Brettin T."/>
            <person name="Bruce D."/>
            <person name="Han C."/>
            <person name="Tapia R."/>
            <person name="Gilna P."/>
            <person name="Schmutz J."/>
            <person name="Larimer F."/>
            <person name="Land M."/>
            <person name="Hauser L."/>
            <person name="Kyrpides N."/>
            <person name="Mikhailova N."/>
            <person name="Nealson K."/>
            <person name="Konstantinidis K."/>
            <person name="Klappenbach J."/>
            <person name="Tiedje J."/>
            <person name="Richardson P."/>
        </authorList>
    </citation>
    <scope>NUCLEOTIDE SEQUENCE [LARGE SCALE GENOMIC DNA]</scope>
    <source>
        <strain>MR-4</strain>
    </source>
</reference>
<evidence type="ECO:0000255" key="1">
    <source>
        <dbReference type="HAMAP-Rule" id="MF_01192"/>
    </source>
</evidence>
<accession>Q0HGN0</accession>
<protein>
    <recommendedName>
        <fullName evidence="1">Flap endonuclease Xni</fullName>
        <shortName evidence="1">FEN</shortName>
        <ecNumber evidence="1">3.1.-.-</ecNumber>
    </recommendedName>
</protein>
<feature type="chain" id="PRO_0000297879" description="Flap endonuclease Xni">
    <location>
        <begin position="1"/>
        <end position="260"/>
    </location>
</feature>
<feature type="domain" description="5'-3' exonuclease" evidence="1">
    <location>
        <begin position="164"/>
        <end position="259"/>
    </location>
</feature>
<feature type="region of interest" description="Interaction with DNA" evidence="1">
    <location>
        <begin position="185"/>
        <end position="190"/>
    </location>
</feature>
<feature type="binding site" evidence="1">
    <location>
        <position position="105"/>
    </location>
    <ligand>
        <name>Mg(2+)</name>
        <dbReference type="ChEBI" id="CHEBI:18420"/>
    </ligand>
</feature>
<feature type="binding site" evidence="1">
    <location>
        <position position="172"/>
    </location>
    <ligand>
        <name>K(+)</name>
        <dbReference type="ChEBI" id="CHEBI:29103"/>
    </ligand>
</feature>
<feature type="binding site" evidence="1">
    <location>
        <position position="173"/>
    </location>
    <ligand>
        <name>K(+)</name>
        <dbReference type="ChEBI" id="CHEBI:29103"/>
    </ligand>
</feature>
<feature type="binding site" evidence="1">
    <location>
        <position position="181"/>
    </location>
    <ligand>
        <name>K(+)</name>
        <dbReference type="ChEBI" id="CHEBI:29103"/>
    </ligand>
</feature>
<feature type="binding site" evidence="1">
    <location>
        <position position="183"/>
    </location>
    <ligand>
        <name>K(+)</name>
        <dbReference type="ChEBI" id="CHEBI:29103"/>
    </ligand>
</feature>
<feature type="binding site" evidence="1">
    <location>
        <position position="186"/>
    </location>
    <ligand>
        <name>K(+)</name>
        <dbReference type="ChEBI" id="CHEBI:29103"/>
    </ligand>
</feature>
<dbReference type="EC" id="3.1.-.-" evidence="1"/>
<dbReference type="EMBL" id="CP000446">
    <property type="protein sequence ID" value="ABI39787.1"/>
    <property type="molecule type" value="Genomic_DNA"/>
</dbReference>
<dbReference type="RefSeq" id="WP_011623467.1">
    <property type="nucleotide sequence ID" value="NC_008321.1"/>
</dbReference>
<dbReference type="SMR" id="Q0HGN0"/>
<dbReference type="KEGG" id="she:Shewmr4_2716"/>
<dbReference type="HOGENOM" id="CLU_004675_1_2_6"/>
<dbReference type="GO" id="GO:0008409">
    <property type="term" value="F:5'-3' exonuclease activity"/>
    <property type="evidence" value="ECO:0007669"/>
    <property type="project" value="InterPro"/>
</dbReference>
<dbReference type="GO" id="GO:0017108">
    <property type="term" value="F:5'-flap endonuclease activity"/>
    <property type="evidence" value="ECO:0007669"/>
    <property type="project" value="UniProtKB-UniRule"/>
</dbReference>
<dbReference type="GO" id="GO:0003677">
    <property type="term" value="F:DNA binding"/>
    <property type="evidence" value="ECO:0007669"/>
    <property type="project" value="UniProtKB-UniRule"/>
</dbReference>
<dbReference type="GO" id="GO:0000287">
    <property type="term" value="F:magnesium ion binding"/>
    <property type="evidence" value="ECO:0007669"/>
    <property type="project" value="UniProtKB-UniRule"/>
</dbReference>
<dbReference type="GO" id="GO:0030955">
    <property type="term" value="F:potassium ion binding"/>
    <property type="evidence" value="ECO:0007669"/>
    <property type="project" value="UniProtKB-UniRule"/>
</dbReference>
<dbReference type="GO" id="GO:0033567">
    <property type="term" value="P:DNA replication, Okazaki fragment processing"/>
    <property type="evidence" value="ECO:0007669"/>
    <property type="project" value="UniProtKB-UniRule"/>
</dbReference>
<dbReference type="CDD" id="cd09898">
    <property type="entry name" value="H3TH_53EXO"/>
    <property type="match status" value="1"/>
</dbReference>
<dbReference type="CDD" id="cd09859">
    <property type="entry name" value="PIN_53EXO"/>
    <property type="match status" value="1"/>
</dbReference>
<dbReference type="FunFam" id="1.10.150.20:FF:000003">
    <property type="entry name" value="DNA polymerase I"/>
    <property type="match status" value="1"/>
</dbReference>
<dbReference type="FunFam" id="3.40.50.1010:FF:000132">
    <property type="entry name" value="Flap endonuclease Xni"/>
    <property type="match status" value="1"/>
</dbReference>
<dbReference type="Gene3D" id="1.10.150.20">
    <property type="entry name" value="5' to 3' exonuclease, C-terminal subdomain"/>
    <property type="match status" value="1"/>
</dbReference>
<dbReference type="Gene3D" id="3.40.50.1010">
    <property type="entry name" value="5'-nuclease"/>
    <property type="match status" value="1"/>
</dbReference>
<dbReference type="HAMAP" id="MF_01192">
    <property type="entry name" value="Xni"/>
    <property type="match status" value="1"/>
</dbReference>
<dbReference type="InterPro" id="IPR020046">
    <property type="entry name" value="5-3_exonucl_a-hlix_arch_N"/>
</dbReference>
<dbReference type="InterPro" id="IPR002421">
    <property type="entry name" value="5-3_exonuclease"/>
</dbReference>
<dbReference type="InterPro" id="IPR036279">
    <property type="entry name" value="5-3_exonuclease_C_sf"/>
</dbReference>
<dbReference type="InterPro" id="IPR020045">
    <property type="entry name" value="DNA_polI_H3TH"/>
</dbReference>
<dbReference type="InterPro" id="IPR038969">
    <property type="entry name" value="FEN"/>
</dbReference>
<dbReference type="InterPro" id="IPR008918">
    <property type="entry name" value="HhH2"/>
</dbReference>
<dbReference type="InterPro" id="IPR029060">
    <property type="entry name" value="PIN-like_dom_sf"/>
</dbReference>
<dbReference type="InterPro" id="IPR022895">
    <property type="entry name" value="Xni"/>
</dbReference>
<dbReference type="NCBIfam" id="NF007017">
    <property type="entry name" value="PRK09482.1"/>
    <property type="match status" value="1"/>
</dbReference>
<dbReference type="PANTHER" id="PTHR42646:SF2">
    <property type="entry name" value="5'-3' EXONUCLEASE FAMILY PROTEIN"/>
    <property type="match status" value="1"/>
</dbReference>
<dbReference type="PANTHER" id="PTHR42646">
    <property type="entry name" value="FLAP ENDONUCLEASE XNI"/>
    <property type="match status" value="1"/>
</dbReference>
<dbReference type="Pfam" id="PF01367">
    <property type="entry name" value="5_3_exonuc"/>
    <property type="match status" value="1"/>
</dbReference>
<dbReference type="Pfam" id="PF02739">
    <property type="entry name" value="5_3_exonuc_N"/>
    <property type="match status" value="1"/>
</dbReference>
<dbReference type="SMART" id="SM00475">
    <property type="entry name" value="53EXOc"/>
    <property type="match status" value="1"/>
</dbReference>
<dbReference type="SMART" id="SM00279">
    <property type="entry name" value="HhH2"/>
    <property type="match status" value="1"/>
</dbReference>
<dbReference type="SUPFAM" id="SSF47807">
    <property type="entry name" value="5' to 3' exonuclease, C-terminal subdomain"/>
    <property type="match status" value="1"/>
</dbReference>
<dbReference type="SUPFAM" id="SSF88723">
    <property type="entry name" value="PIN domain-like"/>
    <property type="match status" value="1"/>
</dbReference>
<keyword id="KW-0238">DNA-binding</keyword>
<keyword id="KW-0255">Endonuclease</keyword>
<keyword id="KW-0378">Hydrolase</keyword>
<keyword id="KW-0460">Magnesium</keyword>
<keyword id="KW-0479">Metal-binding</keyword>
<keyword id="KW-0540">Nuclease</keyword>
<keyword id="KW-0630">Potassium</keyword>
<name>XNI_SHESM</name>
<comment type="function">
    <text evidence="1">Has flap endonuclease activity. During DNA replication, flap endonucleases cleave the 5'-overhanging flap structure that is generated by displacement synthesis when DNA polymerase encounters the 5'-end of a downstream Okazaki fragment.</text>
</comment>
<comment type="cofactor">
    <cofactor evidence="1">
        <name>Mg(2+)</name>
        <dbReference type="ChEBI" id="CHEBI:18420"/>
    </cofactor>
    <text evidence="1">Binds 2 Mg(2+) per subunit. Only one magnesium ion has a direct interaction with the protein, the other interactions are indirect.</text>
</comment>
<comment type="cofactor">
    <cofactor evidence="1">
        <name>K(+)</name>
        <dbReference type="ChEBI" id="CHEBI:29103"/>
    </cofactor>
    <text evidence="1">Binds 1 K(+) per subunit. The potassium ion strongly increases the affinity for DNA.</text>
</comment>
<comment type="similarity">
    <text evidence="1">Belongs to the Xni family.</text>
</comment>
<sequence length="260" mass="28783">MNKFLIIDGLNLVRRIYAAIPDENDMDSLTDRVSVACTKLLRIHHPTHVAIVWDGDEISWRKQLYPDYKKGRKPMPEPLAAGLSALQEHLKSLPIQSIYAAAEADDVIATLAMKTAKAQGEAVIVSTDKGFSQLNHPRISQWDHFNQQYLNIAELEQKLGVDRNQFLDLMALAGDSGNKIPGIAGIGPKSAAELLRTFRTLATLFSSLSNLGAKQAKKLAEGRDMARLSYKLAQLQTDLPLNINLRDFRVNGPANTQQAE</sequence>